<accession>Q4ZYX1</accession>
<protein>
    <recommendedName>
        <fullName evidence="1">Small ribosomal subunit protein bS6</fullName>
    </recommendedName>
    <alternativeName>
        <fullName evidence="3">30S ribosomal protein S6</fullName>
    </alternativeName>
</protein>
<reference key="1">
    <citation type="journal article" date="2005" name="Proc. Natl. Acad. Sci. U.S.A.">
        <title>Comparison of the complete genome sequences of Pseudomonas syringae pv. syringae B728a and pv. tomato DC3000.</title>
        <authorList>
            <person name="Feil H."/>
            <person name="Feil W.S."/>
            <person name="Chain P."/>
            <person name="Larimer F."/>
            <person name="Dibartolo G."/>
            <person name="Copeland A."/>
            <person name="Lykidis A."/>
            <person name="Trong S."/>
            <person name="Nolan M."/>
            <person name="Goltsman E."/>
            <person name="Thiel J."/>
            <person name="Malfatti S."/>
            <person name="Loper J.E."/>
            <person name="Lapidus A."/>
            <person name="Detter J.C."/>
            <person name="Land M."/>
            <person name="Richardson P.M."/>
            <person name="Kyrpides N.C."/>
            <person name="Ivanova N."/>
            <person name="Lindow S.E."/>
        </authorList>
    </citation>
    <scope>NUCLEOTIDE SEQUENCE [LARGE SCALE GENOMIC DNA]</scope>
    <source>
        <strain>B728a</strain>
    </source>
</reference>
<evidence type="ECO:0000255" key="1">
    <source>
        <dbReference type="HAMAP-Rule" id="MF_00360"/>
    </source>
</evidence>
<evidence type="ECO:0000256" key="2">
    <source>
        <dbReference type="SAM" id="MobiDB-lite"/>
    </source>
</evidence>
<evidence type="ECO:0000305" key="3"/>
<proteinExistence type="inferred from homology"/>
<name>RS6_PSEU2</name>
<dbReference type="EMBL" id="CP000075">
    <property type="protein sequence ID" value="AAY35651.1"/>
    <property type="molecule type" value="Genomic_DNA"/>
</dbReference>
<dbReference type="RefSeq" id="WP_002551828.1">
    <property type="nucleotide sequence ID" value="NC_007005.1"/>
</dbReference>
<dbReference type="RefSeq" id="YP_233689.1">
    <property type="nucleotide sequence ID" value="NC_007005.1"/>
</dbReference>
<dbReference type="SMR" id="Q4ZYX1"/>
<dbReference type="STRING" id="205918.Psyr_0581"/>
<dbReference type="GeneID" id="93657284"/>
<dbReference type="KEGG" id="psb:Psyr_0581"/>
<dbReference type="PATRIC" id="fig|205918.7.peg.604"/>
<dbReference type="eggNOG" id="COG0360">
    <property type="taxonomic scope" value="Bacteria"/>
</dbReference>
<dbReference type="HOGENOM" id="CLU_113441_6_1_6"/>
<dbReference type="OrthoDB" id="9812702at2"/>
<dbReference type="Proteomes" id="UP000000426">
    <property type="component" value="Chromosome"/>
</dbReference>
<dbReference type="GO" id="GO:0022627">
    <property type="term" value="C:cytosolic small ribosomal subunit"/>
    <property type="evidence" value="ECO:0007669"/>
    <property type="project" value="TreeGrafter"/>
</dbReference>
<dbReference type="GO" id="GO:0070181">
    <property type="term" value="F:small ribosomal subunit rRNA binding"/>
    <property type="evidence" value="ECO:0007669"/>
    <property type="project" value="TreeGrafter"/>
</dbReference>
<dbReference type="GO" id="GO:0003735">
    <property type="term" value="F:structural constituent of ribosome"/>
    <property type="evidence" value="ECO:0007669"/>
    <property type="project" value="InterPro"/>
</dbReference>
<dbReference type="GO" id="GO:0006412">
    <property type="term" value="P:translation"/>
    <property type="evidence" value="ECO:0007669"/>
    <property type="project" value="UniProtKB-UniRule"/>
</dbReference>
<dbReference type="CDD" id="cd00473">
    <property type="entry name" value="bS6"/>
    <property type="match status" value="1"/>
</dbReference>
<dbReference type="FunFam" id="3.30.70.60:FF:000003">
    <property type="entry name" value="30S ribosomal protein S6"/>
    <property type="match status" value="1"/>
</dbReference>
<dbReference type="Gene3D" id="3.30.70.60">
    <property type="match status" value="1"/>
</dbReference>
<dbReference type="HAMAP" id="MF_00360">
    <property type="entry name" value="Ribosomal_bS6"/>
    <property type="match status" value="1"/>
</dbReference>
<dbReference type="InterPro" id="IPR000529">
    <property type="entry name" value="Ribosomal_bS6"/>
</dbReference>
<dbReference type="InterPro" id="IPR020815">
    <property type="entry name" value="Ribosomal_bS6_CS"/>
</dbReference>
<dbReference type="InterPro" id="IPR035980">
    <property type="entry name" value="Ribosomal_bS6_sf"/>
</dbReference>
<dbReference type="InterPro" id="IPR020814">
    <property type="entry name" value="Ribosomal_S6_plastid/chlpt"/>
</dbReference>
<dbReference type="InterPro" id="IPR014717">
    <property type="entry name" value="Transl_elong_EF1B/ribsomal_bS6"/>
</dbReference>
<dbReference type="NCBIfam" id="TIGR00166">
    <property type="entry name" value="S6"/>
    <property type="match status" value="1"/>
</dbReference>
<dbReference type="PANTHER" id="PTHR21011">
    <property type="entry name" value="MITOCHONDRIAL 28S RIBOSOMAL PROTEIN S6"/>
    <property type="match status" value="1"/>
</dbReference>
<dbReference type="PANTHER" id="PTHR21011:SF1">
    <property type="entry name" value="SMALL RIBOSOMAL SUBUNIT PROTEIN BS6M"/>
    <property type="match status" value="1"/>
</dbReference>
<dbReference type="Pfam" id="PF01250">
    <property type="entry name" value="Ribosomal_S6"/>
    <property type="match status" value="1"/>
</dbReference>
<dbReference type="SUPFAM" id="SSF54995">
    <property type="entry name" value="Ribosomal protein S6"/>
    <property type="match status" value="1"/>
</dbReference>
<dbReference type="PROSITE" id="PS01048">
    <property type="entry name" value="RIBOSOMAL_S6"/>
    <property type="match status" value="1"/>
</dbReference>
<sequence>MRHYEIIFLVHPDQSEQVGGMVERYTKLIEEDGGKIHRLEDWGRRQLAYAINNVHKAHYVMLNVECTGKALAELEDNFRYNDAVIRNLVIRRDEAVTGQSEMLKAEENRSERRERRDRPEHSDSADGDDGDNSDVSDNADE</sequence>
<comment type="function">
    <text evidence="1">Binds together with bS18 to 16S ribosomal RNA.</text>
</comment>
<comment type="similarity">
    <text evidence="1">Belongs to the bacterial ribosomal protein bS6 family.</text>
</comment>
<organism>
    <name type="scientific">Pseudomonas syringae pv. syringae (strain B728a)</name>
    <dbReference type="NCBI Taxonomy" id="205918"/>
    <lineage>
        <taxon>Bacteria</taxon>
        <taxon>Pseudomonadati</taxon>
        <taxon>Pseudomonadota</taxon>
        <taxon>Gammaproteobacteria</taxon>
        <taxon>Pseudomonadales</taxon>
        <taxon>Pseudomonadaceae</taxon>
        <taxon>Pseudomonas</taxon>
        <taxon>Pseudomonas syringae</taxon>
    </lineage>
</organism>
<gene>
    <name evidence="1" type="primary">rpsF</name>
    <name type="ordered locus">Psyr_0581</name>
</gene>
<feature type="chain" id="PRO_0000229568" description="Small ribosomal subunit protein bS6">
    <location>
        <begin position="1"/>
        <end position="141"/>
    </location>
</feature>
<feature type="region of interest" description="Disordered" evidence="2">
    <location>
        <begin position="97"/>
        <end position="141"/>
    </location>
</feature>
<feature type="compositionally biased region" description="Basic and acidic residues" evidence="2">
    <location>
        <begin position="103"/>
        <end position="124"/>
    </location>
</feature>
<feature type="compositionally biased region" description="Acidic residues" evidence="2">
    <location>
        <begin position="125"/>
        <end position="141"/>
    </location>
</feature>
<keyword id="KW-0687">Ribonucleoprotein</keyword>
<keyword id="KW-0689">Ribosomal protein</keyword>
<keyword id="KW-0694">RNA-binding</keyword>
<keyword id="KW-0699">rRNA-binding</keyword>